<gene>
    <name type="ordered locus">SERP0979</name>
</gene>
<comment type="similarity">
    <text evidence="2">Belongs to the CbbQ/NirQ/NorQ/GpvN family.</text>
</comment>
<feature type="chain" id="PRO_0000284815" description="Uncharacterized protein SERP0979">
    <location>
        <begin position="1"/>
        <end position="263"/>
    </location>
</feature>
<feature type="binding site" evidence="1">
    <location>
        <begin position="31"/>
        <end position="38"/>
    </location>
    <ligand>
        <name>ATP</name>
        <dbReference type="ChEBI" id="CHEBI:30616"/>
    </ligand>
</feature>
<name>Y979_STAEQ</name>
<organism>
    <name type="scientific">Staphylococcus epidermidis (strain ATCC 35984 / DSM 28319 / BCRC 17069 / CCUG 31568 / BM 3577 / RP62A)</name>
    <dbReference type="NCBI Taxonomy" id="176279"/>
    <lineage>
        <taxon>Bacteria</taxon>
        <taxon>Bacillati</taxon>
        <taxon>Bacillota</taxon>
        <taxon>Bacilli</taxon>
        <taxon>Bacillales</taxon>
        <taxon>Staphylococcaceae</taxon>
        <taxon>Staphylococcus</taxon>
    </lineage>
</organism>
<reference key="1">
    <citation type="journal article" date="2005" name="J. Bacteriol.">
        <title>Insights on evolution of virulence and resistance from the complete genome analysis of an early methicillin-resistant Staphylococcus aureus strain and a biofilm-producing methicillin-resistant Staphylococcus epidermidis strain.</title>
        <authorList>
            <person name="Gill S.R."/>
            <person name="Fouts D.E."/>
            <person name="Archer G.L."/>
            <person name="Mongodin E.F."/>
            <person name="DeBoy R.T."/>
            <person name="Ravel J."/>
            <person name="Paulsen I.T."/>
            <person name="Kolonay J.F."/>
            <person name="Brinkac L.M."/>
            <person name="Beanan M.J."/>
            <person name="Dodson R.J."/>
            <person name="Daugherty S.C."/>
            <person name="Madupu R."/>
            <person name="Angiuoli S.V."/>
            <person name="Durkin A.S."/>
            <person name="Haft D.H."/>
            <person name="Vamathevan J.J."/>
            <person name="Khouri H."/>
            <person name="Utterback T.R."/>
            <person name="Lee C."/>
            <person name="Dimitrov G."/>
            <person name="Jiang L."/>
            <person name="Qin H."/>
            <person name="Weidman J."/>
            <person name="Tran K."/>
            <person name="Kang K.H."/>
            <person name="Hance I.R."/>
            <person name="Nelson K.E."/>
            <person name="Fraser C.M."/>
        </authorList>
    </citation>
    <scope>NUCLEOTIDE SEQUENCE [LARGE SCALE GENOMIC DNA]</scope>
    <source>
        <strain>ATCC 35984 / DSM 28319 / BCRC 17069 / CCUG 31568 / BM 3577 / RP62A</strain>
    </source>
</reference>
<dbReference type="EMBL" id="CP000029">
    <property type="protein sequence ID" value="AAW54326.1"/>
    <property type="molecule type" value="Genomic_DNA"/>
</dbReference>
<dbReference type="RefSeq" id="WP_002457650.1">
    <property type="nucleotide sequence ID" value="NC_002976.3"/>
</dbReference>
<dbReference type="SMR" id="Q5HPD3"/>
<dbReference type="STRING" id="176279.SERP0979"/>
<dbReference type="KEGG" id="ser:SERP0979"/>
<dbReference type="eggNOG" id="COG0714">
    <property type="taxonomic scope" value="Bacteria"/>
</dbReference>
<dbReference type="HOGENOM" id="CLU_080347_0_0_9"/>
<dbReference type="Proteomes" id="UP000000531">
    <property type="component" value="Chromosome"/>
</dbReference>
<dbReference type="GO" id="GO:0005524">
    <property type="term" value="F:ATP binding"/>
    <property type="evidence" value="ECO:0007669"/>
    <property type="project" value="UniProtKB-KW"/>
</dbReference>
<dbReference type="GO" id="GO:0016887">
    <property type="term" value="F:ATP hydrolysis activity"/>
    <property type="evidence" value="ECO:0007669"/>
    <property type="project" value="InterPro"/>
</dbReference>
<dbReference type="CDD" id="cd00009">
    <property type="entry name" value="AAA"/>
    <property type="match status" value="1"/>
</dbReference>
<dbReference type="Gene3D" id="3.40.50.300">
    <property type="entry name" value="P-loop containing nucleotide triphosphate hydrolases"/>
    <property type="match status" value="1"/>
</dbReference>
<dbReference type="InterPro" id="IPR003593">
    <property type="entry name" value="AAA+_ATPase"/>
</dbReference>
<dbReference type="InterPro" id="IPR011704">
    <property type="entry name" value="ATPase_dyneun-rel_AAA"/>
</dbReference>
<dbReference type="InterPro" id="IPR050764">
    <property type="entry name" value="CbbQ/NirQ/NorQ/GpvN"/>
</dbReference>
<dbReference type="InterPro" id="IPR013615">
    <property type="entry name" value="CbbQ_C"/>
</dbReference>
<dbReference type="InterPro" id="IPR001270">
    <property type="entry name" value="ClpA/B"/>
</dbReference>
<dbReference type="InterPro" id="IPR027417">
    <property type="entry name" value="P-loop_NTPase"/>
</dbReference>
<dbReference type="PANTHER" id="PTHR42759:SF1">
    <property type="entry name" value="MAGNESIUM-CHELATASE SUBUNIT CHLD"/>
    <property type="match status" value="1"/>
</dbReference>
<dbReference type="PANTHER" id="PTHR42759">
    <property type="entry name" value="MOXR FAMILY PROTEIN"/>
    <property type="match status" value="1"/>
</dbReference>
<dbReference type="Pfam" id="PF07728">
    <property type="entry name" value="AAA_5"/>
    <property type="match status" value="1"/>
</dbReference>
<dbReference type="Pfam" id="PF08406">
    <property type="entry name" value="CbbQ_C"/>
    <property type="match status" value="1"/>
</dbReference>
<dbReference type="PRINTS" id="PR00300">
    <property type="entry name" value="CLPPROTEASEA"/>
</dbReference>
<dbReference type="SMART" id="SM00382">
    <property type="entry name" value="AAA"/>
    <property type="match status" value="1"/>
</dbReference>
<dbReference type="SUPFAM" id="SSF52540">
    <property type="entry name" value="P-loop containing nucleoside triphosphate hydrolases"/>
    <property type="match status" value="1"/>
</dbReference>
<sequence length="263" mass="29549">MVQTVYKNSDQTVFEDAKALFQLNKNILLKGPTGSGKTKLAETLSHVMNLPMHQVNCSVDLDTESLLGFKTIQTNEEGHQEIVFIDGPVIKAMKEGHILYIDEINMAKPETLPILNGVLDYRRQLTNPYTGEVIKAAPGFNVIAAINEGYVGTLPMNEALKNRFIVIEVDYIDGDILKTVIKEQSKLQDEQLIQHIIKFNEDLRTMTKQGQISEEAASIRALIDLSDLATVMPIERAVQRTIIDKLEDEREQQAILNAIELNF</sequence>
<evidence type="ECO:0000255" key="1"/>
<evidence type="ECO:0000305" key="2"/>
<keyword id="KW-0067">ATP-binding</keyword>
<keyword id="KW-0547">Nucleotide-binding</keyword>
<keyword id="KW-1185">Reference proteome</keyword>
<accession>Q5HPD3</accession>
<proteinExistence type="inferred from homology"/>
<protein>
    <recommendedName>
        <fullName>Uncharacterized protein SERP0979</fullName>
    </recommendedName>
</protein>